<protein>
    <recommendedName>
        <fullName>Fluoroquinolones export ATP-binding protein MT2762</fullName>
        <ecNumber>7.6.2.-</ecNumber>
    </recommendedName>
</protein>
<comment type="function">
    <text evidence="1">Part of the ABC transporter complex involved in fluoroquinolones export. Probably responsible for energy coupling to the transport system (By similarity).</text>
</comment>
<comment type="subunit">
    <text evidence="1">The complex is composed of 2 ATP-binding proteins and 2 transmembrane proteins.</text>
</comment>
<comment type="subcellular location">
    <subcellularLocation>
        <location evidence="1">Cell membrane</location>
        <topology evidence="1">Peripheral membrane protein</topology>
    </subcellularLocation>
</comment>
<comment type="similarity">
    <text evidence="3">Belongs to the ABC transporter superfamily.</text>
</comment>
<comment type="sequence caution" evidence="3">
    <conflict type="frameshift">
        <sequence resource="EMBL-CDS" id="AAK47077"/>
    </conflict>
</comment>
<proteinExistence type="inferred from homology"/>
<evidence type="ECO:0000250" key="1"/>
<evidence type="ECO:0000255" key="2">
    <source>
        <dbReference type="PROSITE-ProRule" id="PRU00434"/>
    </source>
</evidence>
<evidence type="ECO:0000305" key="3"/>
<sequence>MTALNRAVASARVGTEVIRVRGLTFRYPKAAEPAVRGMEFTVGRGEIFGLLGPSGAGKSTTQKLLIGLLRDHGGQATVWDKEPAEWGPDYYERIGVSFELPNHYQKLTGYENLRFFASLYAGATADPMQLLAAVGLADDAHTLVGKYSKGMQMRLTFARSLINDPELLFLDEPTSGLDPVNARKIKDIIVDLKARGRTIFLTTHDMATADELCDRVAFVVDGRIVALDSPTELKIARSRRRVRVEYRGDGGGLETAEFGMDGLADDPAFHSVLRNHHVETIHSREASLDDVFVEVTGRQLT</sequence>
<accession>P9WQL6</accession>
<accession>L0TAL1</accession>
<accession>O07190</accession>
<accession>Q8VJE4</accession>
<feature type="chain" id="PRO_0000426754" description="Fluoroquinolones export ATP-binding protein MT2762">
    <location>
        <begin position="1"/>
        <end position="301"/>
    </location>
</feature>
<feature type="domain" description="ABC transporter" evidence="2">
    <location>
        <begin position="18"/>
        <end position="246"/>
    </location>
</feature>
<feature type="binding site" evidence="2">
    <location>
        <begin position="52"/>
        <end position="59"/>
    </location>
    <ligand>
        <name>ATP</name>
        <dbReference type="ChEBI" id="CHEBI:30616"/>
    </ligand>
</feature>
<keyword id="KW-0046">Antibiotic resistance</keyword>
<keyword id="KW-0067">ATP-binding</keyword>
<keyword id="KW-1003">Cell membrane</keyword>
<keyword id="KW-0472">Membrane</keyword>
<keyword id="KW-0547">Nucleotide-binding</keyword>
<keyword id="KW-1185">Reference proteome</keyword>
<keyword id="KW-1278">Translocase</keyword>
<keyword id="KW-0813">Transport</keyword>
<dbReference type="EC" id="7.6.2.-"/>
<dbReference type="EMBL" id="AE000516">
    <property type="protein sequence ID" value="AAK47077.1"/>
    <property type="status" value="ALT_FRAME"/>
    <property type="molecule type" value="Genomic_DNA"/>
</dbReference>
<dbReference type="PIR" id="C70529">
    <property type="entry name" value="C70529"/>
</dbReference>
<dbReference type="SMR" id="P9WQL6"/>
<dbReference type="KEGG" id="mtc:MT2762"/>
<dbReference type="HOGENOM" id="CLU_000604_1_2_11"/>
<dbReference type="Proteomes" id="UP000001020">
    <property type="component" value="Chromosome"/>
</dbReference>
<dbReference type="GO" id="GO:0005886">
    <property type="term" value="C:plasma membrane"/>
    <property type="evidence" value="ECO:0007669"/>
    <property type="project" value="UniProtKB-SubCell"/>
</dbReference>
<dbReference type="GO" id="GO:0005524">
    <property type="term" value="F:ATP binding"/>
    <property type="evidence" value="ECO:0007669"/>
    <property type="project" value="UniProtKB-KW"/>
</dbReference>
<dbReference type="GO" id="GO:0016887">
    <property type="term" value="F:ATP hydrolysis activity"/>
    <property type="evidence" value="ECO:0007669"/>
    <property type="project" value="InterPro"/>
</dbReference>
<dbReference type="GO" id="GO:0046677">
    <property type="term" value="P:response to antibiotic"/>
    <property type="evidence" value="ECO:0007669"/>
    <property type="project" value="UniProtKB-KW"/>
</dbReference>
<dbReference type="CDD" id="cd03230">
    <property type="entry name" value="ABC_DR_subfamily_A"/>
    <property type="match status" value="1"/>
</dbReference>
<dbReference type="FunFam" id="3.40.50.300:FF:000589">
    <property type="entry name" value="ABC transporter, ATP-binding subunit"/>
    <property type="match status" value="1"/>
</dbReference>
<dbReference type="Gene3D" id="3.40.50.300">
    <property type="entry name" value="P-loop containing nucleotide triphosphate hydrolases"/>
    <property type="match status" value="1"/>
</dbReference>
<dbReference type="InterPro" id="IPR003593">
    <property type="entry name" value="AAA+_ATPase"/>
</dbReference>
<dbReference type="InterPro" id="IPR003439">
    <property type="entry name" value="ABC_transporter-like_ATP-bd"/>
</dbReference>
<dbReference type="InterPro" id="IPR017871">
    <property type="entry name" value="ABC_transporter-like_CS"/>
</dbReference>
<dbReference type="InterPro" id="IPR050763">
    <property type="entry name" value="ABC_transporter_ATP-binding"/>
</dbReference>
<dbReference type="InterPro" id="IPR027417">
    <property type="entry name" value="P-loop_NTPase"/>
</dbReference>
<dbReference type="PANTHER" id="PTHR42711">
    <property type="entry name" value="ABC TRANSPORTER ATP-BINDING PROTEIN"/>
    <property type="match status" value="1"/>
</dbReference>
<dbReference type="PANTHER" id="PTHR42711:SF18">
    <property type="entry name" value="ABC TRANSPORTER, ATP-BINDING PROTEIN"/>
    <property type="match status" value="1"/>
</dbReference>
<dbReference type="Pfam" id="PF00005">
    <property type="entry name" value="ABC_tran"/>
    <property type="match status" value="1"/>
</dbReference>
<dbReference type="SMART" id="SM00382">
    <property type="entry name" value="AAA"/>
    <property type="match status" value="1"/>
</dbReference>
<dbReference type="SUPFAM" id="SSF52540">
    <property type="entry name" value="P-loop containing nucleoside triphosphate hydrolases"/>
    <property type="match status" value="1"/>
</dbReference>
<dbReference type="PROSITE" id="PS00211">
    <property type="entry name" value="ABC_TRANSPORTER_1"/>
    <property type="match status" value="1"/>
</dbReference>
<dbReference type="PROSITE" id="PS50893">
    <property type="entry name" value="ABC_TRANSPORTER_2"/>
    <property type="match status" value="1"/>
</dbReference>
<gene>
    <name type="ordered locus">MT2762</name>
</gene>
<name>FLQE1_MYCTO</name>
<organism>
    <name type="scientific">Mycobacterium tuberculosis (strain CDC 1551 / Oshkosh)</name>
    <dbReference type="NCBI Taxonomy" id="83331"/>
    <lineage>
        <taxon>Bacteria</taxon>
        <taxon>Bacillati</taxon>
        <taxon>Actinomycetota</taxon>
        <taxon>Actinomycetes</taxon>
        <taxon>Mycobacteriales</taxon>
        <taxon>Mycobacteriaceae</taxon>
        <taxon>Mycobacterium</taxon>
        <taxon>Mycobacterium tuberculosis complex</taxon>
    </lineage>
</organism>
<reference key="1">
    <citation type="journal article" date="2002" name="J. Bacteriol.">
        <title>Whole-genome comparison of Mycobacterium tuberculosis clinical and laboratory strains.</title>
        <authorList>
            <person name="Fleischmann R.D."/>
            <person name="Alland D."/>
            <person name="Eisen J.A."/>
            <person name="Carpenter L."/>
            <person name="White O."/>
            <person name="Peterson J.D."/>
            <person name="DeBoy R.T."/>
            <person name="Dodson R.J."/>
            <person name="Gwinn M.L."/>
            <person name="Haft D.H."/>
            <person name="Hickey E.K."/>
            <person name="Kolonay J.F."/>
            <person name="Nelson W.C."/>
            <person name="Umayam L.A."/>
            <person name="Ermolaeva M.D."/>
            <person name="Salzberg S.L."/>
            <person name="Delcher A."/>
            <person name="Utterback T.R."/>
            <person name="Weidman J.F."/>
            <person name="Khouri H.M."/>
            <person name="Gill J."/>
            <person name="Mikula A."/>
            <person name="Bishai W."/>
            <person name="Jacobs W.R. Jr."/>
            <person name="Venter J.C."/>
            <person name="Fraser C.M."/>
        </authorList>
    </citation>
    <scope>NUCLEOTIDE SEQUENCE [LARGE SCALE GENOMIC DNA]</scope>
    <source>
        <strain>CDC 1551 / Oshkosh</strain>
    </source>
</reference>